<comment type="function">
    <text>May play a role in vesicular transport from endoplasmic reticulum to Golgi.</text>
</comment>
<comment type="subunit">
    <text evidence="1">Component of the multisubunit TRAPP (transport protein particle) complex, which includes at least TRAPPC2, TRAPPC2L, TRAPPC3, TRAPPC3L, TRAPPC4, TRAPPC5, TRAPPC8, TRAPPC9, TRAPPC10, TRAPPC11 and TRAPPC12.</text>
</comment>
<comment type="subcellular location">
    <subcellularLocation>
        <location evidence="1">Golgi apparatus</location>
        <location evidence="1">cis-Golgi network</location>
    </subcellularLocation>
    <subcellularLocation>
        <location evidence="1">Endoplasmic reticulum</location>
    </subcellularLocation>
</comment>
<comment type="similarity">
    <text evidence="3">Belongs to the TRAPP small subunits family. BET3 subfamily.</text>
</comment>
<protein>
    <recommendedName>
        <fullName>Trafficking protein particle complex subunit 5</fullName>
    </recommendedName>
</protein>
<sequence>MEARFTRGKSALLERALARPRTEVSLSAFALLFSELVQHCQSRVFTVAELQARLAALGRQVGARVLDALVAREKGARRETKVLGALLFVKGAVWKALFGKEADKLEQANDDARTFYIIEREPLINTYISVPKENSTLNCASFTAGIVEAVLTHSGFPAKVTAHWHKGTTLMIKFEEAVIARDRALEGR</sequence>
<accession>Q2NL13</accession>
<feature type="chain" id="PRO_0000244537" description="Trafficking protein particle complex subunit 5">
    <location>
        <begin position="1"/>
        <end position="188"/>
    </location>
</feature>
<feature type="modified residue" description="Phosphoserine" evidence="2">
    <location>
        <position position="10"/>
    </location>
</feature>
<organism>
    <name type="scientific">Bos taurus</name>
    <name type="common">Bovine</name>
    <dbReference type="NCBI Taxonomy" id="9913"/>
    <lineage>
        <taxon>Eukaryota</taxon>
        <taxon>Metazoa</taxon>
        <taxon>Chordata</taxon>
        <taxon>Craniata</taxon>
        <taxon>Vertebrata</taxon>
        <taxon>Euteleostomi</taxon>
        <taxon>Mammalia</taxon>
        <taxon>Eutheria</taxon>
        <taxon>Laurasiatheria</taxon>
        <taxon>Artiodactyla</taxon>
        <taxon>Ruminantia</taxon>
        <taxon>Pecora</taxon>
        <taxon>Bovidae</taxon>
        <taxon>Bovinae</taxon>
        <taxon>Bos</taxon>
    </lineage>
</organism>
<keyword id="KW-0256">Endoplasmic reticulum</keyword>
<keyword id="KW-0931">ER-Golgi transport</keyword>
<keyword id="KW-0333">Golgi apparatus</keyword>
<keyword id="KW-0597">Phosphoprotein</keyword>
<keyword id="KW-1185">Reference proteome</keyword>
<keyword id="KW-0813">Transport</keyword>
<gene>
    <name type="primary">TRAPPC5</name>
</gene>
<proteinExistence type="evidence at transcript level"/>
<reference key="1">
    <citation type="submission" date="2005-12" db="EMBL/GenBank/DDBJ databases">
        <authorList>
            <consortium name="NIH - Mammalian Gene Collection (MGC) project"/>
        </authorList>
    </citation>
    <scope>NUCLEOTIDE SEQUENCE [LARGE SCALE MRNA]</scope>
    <source>
        <strain>Crossbred X Angus</strain>
        <tissue>Liver</tissue>
    </source>
</reference>
<evidence type="ECO:0000250" key="1"/>
<evidence type="ECO:0000250" key="2">
    <source>
        <dbReference type="UniProtKB" id="Q8IUR0"/>
    </source>
</evidence>
<evidence type="ECO:0000305" key="3"/>
<name>TPPC5_BOVIN</name>
<dbReference type="EMBL" id="BC111232">
    <property type="protein sequence ID" value="AAI11233.1"/>
    <property type="molecule type" value="mRNA"/>
</dbReference>
<dbReference type="RefSeq" id="NP_001071317.1">
    <property type="nucleotide sequence ID" value="NM_001077849.2"/>
</dbReference>
<dbReference type="SMR" id="Q2NL13"/>
<dbReference type="FunCoup" id="Q2NL13">
    <property type="interactions" value="707"/>
</dbReference>
<dbReference type="STRING" id="9913.ENSBTAP00000005590"/>
<dbReference type="PaxDb" id="9913-ENSBTAP00000005590"/>
<dbReference type="GeneID" id="504874"/>
<dbReference type="KEGG" id="bta:504874"/>
<dbReference type="CTD" id="126003"/>
<dbReference type="eggNOG" id="KOG3315">
    <property type="taxonomic scope" value="Eukaryota"/>
</dbReference>
<dbReference type="InParanoid" id="Q2NL13"/>
<dbReference type="OrthoDB" id="10254842at2759"/>
<dbReference type="Proteomes" id="UP000009136">
    <property type="component" value="Unplaced"/>
</dbReference>
<dbReference type="GO" id="GO:0005783">
    <property type="term" value="C:endoplasmic reticulum"/>
    <property type="evidence" value="ECO:0007669"/>
    <property type="project" value="UniProtKB-SubCell"/>
</dbReference>
<dbReference type="GO" id="GO:1990070">
    <property type="term" value="C:TRAPPI protein complex"/>
    <property type="evidence" value="ECO:0000318"/>
    <property type="project" value="GO_Central"/>
</dbReference>
<dbReference type="GO" id="GO:1990071">
    <property type="term" value="C:TRAPPII protein complex"/>
    <property type="evidence" value="ECO:0000318"/>
    <property type="project" value="GO_Central"/>
</dbReference>
<dbReference type="GO" id="GO:1990072">
    <property type="term" value="C:TRAPPIII protein complex"/>
    <property type="evidence" value="ECO:0000318"/>
    <property type="project" value="GO_Central"/>
</dbReference>
<dbReference type="GO" id="GO:0006888">
    <property type="term" value="P:endoplasmic reticulum to Golgi vesicle-mediated transport"/>
    <property type="evidence" value="ECO:0000318"/>
    <property type="project" value="GO_Central"/>
</dbReference>
<dbReference type="CDD" id="cd14943">
    <property type="entry name" value="TRAPPC5_Trs31"/>
    <property type="match status" value="1"/>
</dbReference>
<dbReference type="FunFam" id="3.30.1380.20:FF:000005">
    <property type="entry name" value="Trafficking protein particle complex subunit 5"/>
    <property type="match status" value="1"/>
</dbReference>
<dbReference type="Gene3D" id="3.30.1380.20">
    <property type="entry name" value="Trafficking protein particle complex subunit 3"/>
    <property type="match status" value="1"/>
</dbReference>
<dbReference type="InterPro" id="IPR024096">
    <property type="entry name" value="NO_sig/Golgi_transp_ligand-bd"/>
</dbReference>
<dbReference type="InterPro" id="IPR016696">
    <property type="entry name" value="TRAPP-I_su5"/>
</dbReference>
<dbReference type="InterPro" id="IPR007194">
    <property type="entry name" value="TRAPP_component"/>
</dbReference>
<dbReference type="PANTHER" id="PTHR20902">
    <property type="entry name" value="41-2 PROTEIN ANTIGEN-RELATED"/>
    <property type="match status" value="1"/>
</dbReference>
<dbReference type="PANTHER" id="PTHR20902:SF0">
    <property type="entry name" value="TRAFFICKING PROTEIN PARTICLE COMPLEX SUBUNIT 5"/>
    <property type="match status" value="1"/>
</dbReference>
<dbReference type="Pfam" id="PF04051">
    <property type="entry name" value="TRAPP"/>
    <property type="match status" value="1"/>
</dbReference>
<dbReference type="PIRSF" id="PIRSF017479">
    <property type="entry name" value="TRAPP_I_complex_Trs31"/>
    <property type="match status" value="1"/>
</dbReference>
<dbReference type="SUPFAM" id="SSF111126">
    <property type="entry name" value="Ligand-binding domain in the NO signalling and Golgi transport"/>
    <property type="match status" value="1"/>
</dbReference>